<accession>Q55GU2</accession>
<proteinExistence type="inferred from homology"/>
<feature type="chain" id="PRO_0000331274" description="Coiled-coil domain-containing protein 43 homolog">
    <location>
        <begin position="1"/>
        <end position="222"/>
    </location>
</feature>
<feature type="region of interest" description="Disordered" evidence="2">
    <location>
        <begin position="102"/>
        <end position="126"/>
    </location>
</feature>
<feature type="region of interest" description="Disordered" evidence="2">
    <location>
        <begin position="159"/>
        <end position="222"/>
    </location>
</feature>
<feature type="coiled-coil region" evidence="1">
    <location>
        <begin position="80"/>
        <end position="111"/>
    </location>
</feature>
<feature type="coiled-coil region" evidence="1">
    <location>
        <begin position="168"/>
        <end position="222"/>
    </location>
</feature>
<feature type="compositionally biased region" description="Basic and acidic residues" evidence="2">
    <location>
        <begin position="112"/>
        <end position="126"/>
    </location>
</feature>
<feature type="compositionally biased region" description="Basic and acidic residues" evidence="2">
    <location>
        <begin position="175"/>
        <end position="212"/>
    </location>
</feature>
<feature type="compositionally biased region" description="Basic residues" evidence="2">
    <location>
        <begin position="213"/>
        <end position="222"/>
    </location>
</feature>
<keyword id="KW-0175">Coiled coil</keyword>
<keyword id="KW-1185">Reference proteome</keyword>
<gene>
    <name type="ORF">DDB_G0267510</name>
</gene>
<dbReference type="EMBL" id="AAFI02000003">
    <property type="protein sequence ID" value="EAL73208.1"/>
    <property type="molecule type" value="Genomic_DNA"/>
</dbReference>
<dbReference type="RefSeq" id="XP_647092.1">
    <property type="nucleotide sequence ID" value="XM_642000.1"/>
</dbReference>
<dbReference type="SMR" id="Q55GU2"/>
<dbReference type="PaxDb" id="44689-DDB0305277"/>
<dbReference type="EnsemblProtists" id="EAL73208">
    <property type="protein sequence ID" value="EAL73208"/>
    <property type="gene ID" value="DDB_G0267510"/>
</dbReference>
<dbReference type="GeneID" id="8615896"/>
<dbReference type="KEGG" id="ddi:DDB_G0267510"/>
<dbReference type="dictyBase" id="DDB_G0267510"/>
<dbReference type="VEuPathDB" id="AmoebaDB:DDB_G0267510"/>
<dbReference type="eggNOG" id="ENOG502SAQK">
    <property type="taxonomic scope" value="Eukaryota"/>
</dbReference>
<dbReference type="HOGENOM" id="CLU_1247342_0_0_1"/>
<dbReference type="InParanoid" id="Q55GU2"/>
<dbReference type="OMA" id="KFLFRNT"/>
<dbReference type="PRO" id="PR:Q55GU2"/>
<dbReference type="Proteomes" id="UP000002195">
    <property type="component" value="Chromosome 1"/>
</dbReference>
<dbReference type="InterPro" id="IPR037666">
    <property type="entry name" value="CCDC43"/>
</dbReference>
<dbReference type="InterPro" id="IPR002483">
    <property type="entry name" value="PWI_dom"/>
</dbReference>
<dbReference type="PANTHER" id="PTHR31684">
    <property type="entry name" value="COILED-COIL DOMAIN-CONTAINING PROTEIN 43"/>
    <property type="match status" value="1"/>
</dbReference>
<dbReference type="PANTHER" id="PTHR31684:SF2">
    <property type="entry name" value="COILED-COIL DOMAIN-CONTAINING PROTEIN 43"/>
    <property type="match status" value="1"/>
</dbReference>
<dbReference type="Pfam" id="PF01480">
    <property type="entry name" value="PWI"/>
    <property type="match status" value="1"/>
</dbReference>
<reference key="1">
    <citation type="journal article" date="2005" name="Nature">
        <title>The genome of the social amoeba Dictyostelium discoideum.</title>
        <authorList>
            <person name="Eichinger L."/>
            <person name="Pachebat J.A."/>
            <person name="Gloeckner G."/>
            <person name="Rajandream M.A."/>
            <person name="Sucgang R."/>
            <person name="Berriman M."/>
            <person name="Song J."/>
            <person name="Olsen R."/>
            <person name="Szafranski K."/>
            <person name="Xu Q."/>
            <person name="Tunggal B."/>
            <person name="Kummerfeld S."/>
            <person name="Madera M."/>
            <person name="Konfortov B.A."/>
            <person name="Rivero F."/>
            <person name="Bankier A.T."/>
            <person name="Lehmann R."/>
            <person name="Hamlin N."/>
            <person name="Davies R."/>
            <person name="Gaudet P."/>
            <person name="Fey P."/>
            <person name="Pilcher K."/>
            <person name="Chen G."/>
            <person name="Saunders D."/>
            <person name="Sodergren E.J."/>
            <person name="Davis P."/>
            <person name="Kerhornou A."/>
            <person name="Nie X."/>
            <person name="Hall N."/>
            <person name="Anjard C."/>
            <person name="Hemphill L."/>
            <person name="Bason N."/>
            <person name="Farbrother P."/>
            <person name="Desany B."/>
            <person name="Just E."/>
            <person name="Morio T."/>
            <person name="Rost R."/>
            <person name="Churcher C.M."/>
            <person name="Cooper J."/>
            <person name="Haydock S."/>
            <person name="van Driessche N."/>
            <person name="Cronin A."/>
            <person name="Goodhead I."/>
            <person name="Muzny D.M."/>
            <person name="Mourier T."/>
            <person name="Pain A."/>
            <person name="Lu M."/>
            <person name="Harper D."/>
            <person name="Lindsay R."/>
            <person name="Hauser H."/>
            <person name="James K.D."/>
            <person name="Quiles M."/>
            <person name="Madan Babu M."/>
            <person name="Saito T."/>
            <person name="Buchrieser C."/>
            <person name="Wardroper A."/>
            <person name="Felder M."/>
            <person name="Thangavelu M."/>
            <person name="Johnson D."/>
            <person name="Knights A."/>
            <person name="Loulseged H."/>
            <person name="Mungall K.L."/>
            <person name="Oliver K."/>
            <person name="Price C."/>
            <person name="Quail M.A."/>
            <person name="Urushihara H."/>
            <person name="Hernandez J."/>
            <person name="Rabbinowitsch E."/>
            <person name="Steffen D."/>
            <person name="Sanders M."/>
            <person name="Ma J."/>
            <person name="Kohara Y."/>
            <person name="Sharp S."/>
            <person name="Simmonds M.N."/>
            <person name="Spiegler S."/>
            <person name="Tivey A."/>
            <person name="Sugano S."/>
            <person name="White B."/>
            <person name="Walker D."/>
            <person name="Woodward J.R."/>
            <person name="Winckler T."/>
            <person name="Tanaka Y."/>
            <person name="Shaulsky G."/>
            <person name="Schleicher M."/>
            <person name="Weinstock G.M."/>
            <person name="Rosenthal A."/>
            <person name="Cox E.C."/>
            <person name="Chisholm R.L."/>
            <person name="Gibbs R.A."/>
            <person name="Loomis W.F."/>
            <person name="Platzer M."/>
            <person name="Kay R.R."/>
            <person name="Williams J.G."/>
            <person name="Dear P.H."/>
            <person name="Noegel A.A."/>
            <person name="Barrell B.G."/>
            <person name="Kuspa A."/>
        </authorList>
    </citation>
    <scope>NUCLEOTIDE SEQUENCE [LARGE SCALE GENOMIC DNA]</scope>
    <source>
        <strain>AX4</strain>
    </source>
</reference>
<sequence>MSRKEKELKEYIEKSLKEFETDDSSMVVEYIFGIISDSSSNDDEKKESISEFLESLTEKDSTSFCNEMLIRHKEIIDDKETENKLKLTNLKLEQELKIKETTQSEINEEEKYENPYHKMSREEQKKRDALLSKYGYDEEDVDENGDIILSDHIEKKKIEDNKIESGLGENLNAKRIADEEKAKREKSKIEHQKKVQRDKEALEKQKRDEEKKKTVKKEKRRL</sequence>
<evidence type="ECO:0000255" key="1"/>
<evidence type="ECO:0000256" key="2">
    <source>
        <dbReference type="SAM" id="MobiDB-lite"/>
    </source>
</evidence>
<evidence type="ECO:0000305" key="3"/>
<protein>
    <recommendedName>
        <fullName>Coiled-coil domain-containing protein 43 homolog</fullName>
    </recommendedName>
</protein>
<organism>
    <name type="scientific">Dictyostelium discoideum</name>
    <name type="common">Social amoeba</name>
    <dbReference type="NCBI Taxonomy" id="44689"/>
    <lineage>
        <taxon>Eukaryota</taxon>
        <taxon>Amoebozoa</taxon>
        <taxon>Evosea</taxon>
        <taxon>Eumycetozoa</taxon>
        <taxon>Dictyostelia</taxon>
        <taxon>Dictyosteliales</taxon>
        <taxon>Dictyosteliaceae</taxon>
        <taxon>Dictyostelium</taxon>
    </lineage>
</organism>
<comment type="similarity">
    <text evidence="3">Belongs to the CCDC43 family.</text>
</comment>
<name>CCD43_DICDI</name>